<feature type="chain" id="PRO_1000195715" description="Large ribosomal subunit protein uL11">
    <location>
        <begin position="1"/>
        <end position="142"/>
    </location>
</feature>
<protein>
    <recommendedName>
        <fullName evidence="1">Large ribosomal subunit protein uL11</fullName>
    </recommendedName>
    <alternativeName>
        <fullName evidence="2">50S ribosomal protein L11</fullName>
    </alternativeName>
</protein>
<name>RL11_SHEWM</name>
<organism>
    <name type="scientific">Shewanella woodyi (strain ATCC 51908 / MS32)</name>
    <dbReference type="NCBI Taxonomy" id="392500"/>
    <lineage>
        <taxon>Bacteria</taxon>
        <taxon>Pseudomonadati</taxon>
        <taxon>Pseudomonadota</taxon>
        <taxon>Gammaproteobacteria</taxon>
        <taxon>Alteromonadales</taxon>
        <taxon>Shewanellaceae</taxon>
        <taxon>Shewanella</taxon>
    </lineage>
</organism>
<proteinExistence type="inferred from homology"/>
<comment type="function">
    <text evidence="1">Forms part of the ribosomal stalk which helps the ribosome interact with GTP-bound translation factors.</text>
</comment>
<comment type="subunit">
    <text evidence="1">Part of the ribosomal stalk of the 50S ribosomal subunit. Interacts with L10 and the large rRNA to form the base of the stalk. L10 forms an elongated spine to which L12 dimers bind in a sequential fashion forming a multimeric L10(L12)X complex.</text>
</comment>
<comment type="PTM">
    <text evidence="1">One or more lysine residues are methylated.</text>
</comment>
<comment type="similarity">
    <text evidence="1">Belongs to the universal ribosomal protein uL11 family.</text>
</comment>
<evidence type="ECO:0000255" key="1">
    <source>
        <dbReference type="HAMAP-Rule" id="MF_00736"/>
    </source>
</evidence>
<evidence type="ECO:0000305" key="2"/>
<reference key="1">
    <citation type="submission" date="2008-02" db="EMBL/GenBank/DDBJ databases">
        <title>Complete sequence of Shewanella woodyi ATCC 51908.</title>
        <authorList>
            <consortium name="US DOE Joint Genome Institute"/>
            <person name="Copeland A."/>
            <person name="Lucas S."/>
            <person name="Lapidus A."/>
            <person name="Glavina del Rio T."/>
            <person name="Dalin E."/>
            <person name="Tice H."/>
            <person name="Bruce D."/>
            <person name="Goodwin L."/>
            <person name="Pitluck S."/>
            <person name="Sims D."/>
            <person name="Brettin T."/>
            <person name="Detter J.C."/>
            <person name="Han C."/>
            <person name="Kuske C.R."/>
            <person name="Schmutz J."/>
            <person name="Larimer F."/>
            <person name="Land M."/>
            <person name="Hauser L."/>
            <person name="Kyrpides N."/>
            <person name="Lykidis A."/>
            <person name="Zhao J.-S."/>
            <person name="Richardson P."/>
        </authorList>
    </citation>
    <scope>NUCLEOTIDE SEQUENCE [LARGE SCALE GENOMIC DNA]</scope>
    <source>
        <strain>ATCC 51908 / MS32</strain>
    </source>
</reference>
<keyword id="KW-0488">Methylation</keyword>
<keyword id="KW-1185">Reference proteome</keyword>
<keyword id="KW-0687">Ribonucleoprotein</keyword>
<keyword id="KW-0689">Ribosomal protein</keyword>
<keyword id="KW-0694">RNA-binding</keyword>
<keyword id="KW-0699">rRNA-binding</keyword>
<gene>
    <name evidence="1" type="primary">rplK</name>
    <name type="ordered locus">Swoo_4701</name>
</gene>
<dbReference type="EMBL" id="CP000961">
    <property type="protein sequence ID" value="ACA88951.1"/>
    <property type="molecule type" value="Genomic_DNA"/>
</dbReference>
<dbReference type="RefSeq" id="WP_012153448.1">
    <property type="nucleotide sequence ID" value="NC_010506.1"/>
</dbReference>
<dbReference type="SMR" id="B1KMZ4"/>
<dbReference type="STRING" id="392500.Swoo_4701"/>
<dbReference type="KEGG" id="swd:Swoo_4701"/>
<dbReference type="eggNOG" id="COG0080">
    <property type="taxonomic scope" value="Bacteria"/>
</dbReference>
<dbReference type="HOGENOM" id="CLU_074237_2_0_6"/>
<dbReference type="Proteomes" id="UP000002168">
    <property type="component" value="Chromosome"/>
</dbReference>
<dbReference type="GO" id="GO:0022625">
    <property type="term" value="C:cytosolic large ribosomal subunit"/>
    <property type="evidence" value="ECO:0007669"/>
    <property type="project" value="TreeGrafter"/>
</dbReference>
<dbReference type="GO" id="GO:0070180">
    <property type="term" value="F:large ribosomal subunit rRNA binding"/>
    <property type="evidence" value="ECO:0007669"/>
    <property type="project" value="UniProtKB-UniRule"/>
</dbReference>
<dbReference type="GO" id="GO:0003735">
    <property type="term" value="F:structural constituent of ribosome"/>
    <property type="evidence" value="ECO:0007669"/>
    <property type="project" value="InterPro"/>
</dbReference>
<dbReference type="GO" id="GO:0006412">
    <property type="term" value="P:translation"/>
    <property type="evidence" value="ECO:0007669"/>
    <property type="project" value="UniProtKB-UniRule"/>
</dbReference>
<dbReference type="CDD" id="cd00349">
    <property type="entry name" value="Ribosomal_L11"/>
    <property type="match status" value="1"/>
</dbReference>
<dbReference type="FunFam" id="1.10.10.250:FF:000001">
    <property type="entry name" value="50S ribosomal protein L11"/>
    <property type="match status" value="1"/>
</dbReference>
<dbReference type="FunFam" id="3.30.1550.10:FF:000001">
    <property type="entry name" value="50S ribosomal protein L11"/>
    <property type="match status" value="1"/>
</dbReference>
<dbReference type="Gene3D" id="1.10.10.250">
    <property type="entry name" value="Ribosomal protein L11, C-terminal domain"/>
    <property type="match status" value="1"/>
</dbReference>
<dbReference type="Gene3D" id="3.30.1550.10">
    <property type="entry name" value="Ribosomal protein L11/L12, N-terminal domain"/>
    <property type="match status" value="1"/>
</dbReference>
<dbReference type="HAMAP" id="MF_00736">
    <property type="entry name" value="Ribosomal_uL11"/>
    <property type="match status" value="1"/>
</dbReference>
<dbReference type="InterPro" id="IPR000911">
    <property type="entry name" value="Ribosomal_uL11"/>
</dbReference>
<dbReference type="InterPro" id="IPR006519">
    <property type="entry name" value="Ribosomal_uL11_bac-typ"/>
</dbReference>
<dbReference type="InterPro" id="IPR020783">
    <property type="entry name" value="Ribosomal_uL11_C"/>
</dbReference>
<dbReference type="InterPro" id="IPR036769">
    <property type="entry name" value="Ribosomal_uL11_C_sf"/>
</dbReference>
<dbReference type="InterPro" id="IPR020785">
    <property type="entry name" value="Ribosomal_uL11_CS"/>
</dbReference>
<dbReference type="InterPro" id="IPR020784">
    <property type="entry name" value="Ribosomal_uL11_N"/>
</dbReference>
<dbReference type="InterPro" id="IPR036796">
    <property type="entry name" value="Ribosomal_uL11_N_sf"/>
</dbReference>
<dbReference type="NCBIfam" id="TIGR01632">
    <property type="entry name" value="L11_bact"/>
    <property type="match status" value="1"/>
</dbReference>
<dbReference type="PANTHER" id="PTHR11661">
    <property type="entry name" value="60S RIBOSOMAL PROTEIN L12"/>
    <property type="match status" value="1"/>
</dbReference>
<dbReference type="PANTHER" id="PTHR11661:SF1">
    <property type="entry name" value="LARGE RIBOSOMAL SUBUNIT PROTEIN UL11M"/>
    <property type="match status" value="1"/>
</dbReference>
<dbReference type="Pfam" id="PF00298">
    <property type="entry name" value="Ribosomal_L11"/>
    <property type="match status" value="1"/>
</dbReference>
<dbReference type="Pfam" id="PF03946">
    <property type="entry name" value="Ribosomal_L11_N"/>
    <property type="match status" value="1"/>
</dbReference>
<dbReference type="SMART" id="SM00649">
    <property type="entry name" value="RL11"/>
    <property type="match status" value="1"/>
</dbReference>
<dbReference type="SUPFAM" id="SSF54747">
    <property type="entry name" value="Ribosomal L11/L12e N-terminal domain"/>
    <property type="match status" value="1"/>
</dbReference>
<dbReference type="SUPFAM" id="SSF46906">
    <property type="entry name" value="Ribosomal protein L11, C-terminal domain"/>
    <property type="match status" value="1"/>
</dbReference>
<dbReference type="PROSITE" id="PS00359">
    <property type="entry name" value="RIBOSOMAL_L11"/>
    <property type="match status" value="1"/>
</dbReference>
<accession>B1KMZ4</accession>
<sequence>MAKKVDGYIKLQVAAGAANPSPPVGPALGQKGVNIMEFCKAFNARTEKFEKGMPIPVVITVYSDRSFTFETKTPPASFLLLKAAGLKSGSGRPNTEKVGTIKRSAVQEIAETKAADMTGADIEAMTRSIEGTARSMGLVVED</sequence>